<sequence>MAHPHLLAERISRLSSALEKGLYERSHAIRLCLLAALSGESVFLLGPPGIAKSLIARRLKFAFQRARAFEYLMTRFSTPEEVFGPLSIQALKDEGRYERLTTGYLPEAEIVFLDEIWKAGPAILNTLLTAINERHFRNGAFEEKIPMRLLVAASNELPEADSSLEALYDRMLIRLWLDKVQDKANFRSMLVSQQDESDNPVPASLQVSDEEYQQWQKDIGAISLPDPVFELIFTLRQQLDNLPNAPYVSDRRWKKAIRLLQASAFFSGRDAVAPIDLILLKDCLWYDAQSLNLMQQQLEILMTGHAWQQQAMLTRLGGIVQRRLQLQQQQSDKTAFTVIKEGGMFSRRPHYTLPPEASASTLTLLLQKPLKLHDMEVIHITFDRSALELWLTKGGEIRGKLNGIGFAQTLNMEVDNAQHLVVRDISLQGTRLALPGAAEDSMPAEIKQQLETLENDWRQQHTRFSEQQHCLFIHSDWLGRIEASLQDVGEQIRQAQQC</sequence>
<accession>Q57HW4</accession>
<gene>
    <name evidence="1" type="primary">ravA</name>
    <name type="ordered locus">SCH_3792</name>
</gene>
<keyword id="KW-0067">ATP-binding</keyword>
<keyword id="KW-0143">Chaperone</keyword>
<keyword id="KW-0963">Cytoplasm</keyword>
<keyword id="KW-0378">Hydrolase</keyword>
<keyword id="KW-0547">Nucleotide-binding</keyword>
<organism>
    <name type="scientific">Salmonella choleraesuis (strain SC-B67)</name>
    <dbReference type="NCBI Taxonomy" id="321314"/>
    <lineage>
        <taxon>Bacteria</taxon>
        <taxon>Pseudomonadati</taxon>
        <taxon>Pseudomonadota</taxon>
        <taxon>Gammaproteobacteria</taxon>
        <taxon>Enterobacterales</taxon>
        <taxon>Enterobacteriaceae</taxon>
        <taxon>Salmonella</taxon>
    </lineage>
</organism>
<dbReference type="EC" id="3.6.1.-" evidence="1"/>
<dbReference type="EMBL" id="AE017220">
    <property type="protein sequence ID" value="AAX67698.1"/>
    <property type="status" value="ALT_INIT"/>
    <property type="molecule type" value="Genomic_DNA"/>
</dbReference>
<dbReference type="RefSeq" id="WP_000940987.1">
    <property type="nucleotide sequence ID" value="NC_006905.1"/>
</dbReference>
<dbReference type="SMR" id="Q57HW4"/>
<dbReference type="KEGG" id="sec:SCH_3792"/>
<dbReference type="HOGENOM" id="CLU_018678_1_0_6"/>
<dbReference type="Proteomes" id="UP000000538">
    <property type="component" value="Chromosome"/>
</dbReference>
<dbReference type="GO" id="GO:0005737">
    <property type="term" value="C:cytoplasm"/>
    <property type="evidence" value="ECO:0007669"/>
    <property type="project" value="UniProtKB-SubCell"/>
</dbReference>
<dbReference type="GO" id="GO:0005524">
    <property type="term" value="F:ATP binding"/>
    <property type="evidence" value="ECO:0007669"/>
    <property type="project" value="UniProtKB-KW"/>
</dbReference>
<dbReference type="GO" id="GO:0016887">
    <property type="term" value="F:ATP hydrolysis activity"/>
    <property type="evidence" value="ECO:0007669"/>
    <property type="project" value="UniProtKB-UniRule"/>
</dbReference>
<dbReference type="CDD" id="cd00009">
    <property type="entry name" value="AAA"/>
    <property type="match status" value="1"/>
</dbReference>
<dbReference type="FunFam" id="3.40.50.300:FF:000410">
    <property type="entry name" value="ATPase RavA"/>
    <property type="match status" value="1"/>
</dbReference>
<dbReference type="Gene3D" id="1.20.58.1510">
    <property type="match status" value="1"/>
</dbReference>
<dbReference type="Gene3D" id="2.40.128.430">
    <property type="match status" value="1"/>
</dbReference>
<dbReference type="Gene3D" id="3.40.50.300">
    <property type="entry name" value="P-loop containing nucleotide triphosphate hydrolases"/>
    <property type="match status" value="1"/>
</dbReference>
<dbReference type="HAMAP" id="MF_01625">
    <property type="entry name" value="ATPase_RavA"/>
    <property type="match status" value="1"/>
</dbReference>
<dbReference type="InterPro" id="IPR003593">
    <property type="entry name" value="AAA+_ATPase"/>
</dbReference>
<dbReference type="InterPro" id="IPR023671">
    <property type="entry name" value="ATPase_RavA"/>
</dbReference>
<dbReference type="InterPro" id="IPR022547">
    <property type="entry name" value="ATPase_RavA_C"/>
</dbReference>
<dbReference type="InterPro" id="IPR045427">
    <property type="entry name" value="MoxR"/>
</dbReference>
<dbReference type="InterPro" id="IPR027417">
    <property type="entry name" value="P-loop_NTPase"/>
</dbReference>
<dbReference type="InterPro" id="IPR041538">
    <property type="entry name" value="RavA-like_AAA_lid"/>
</dbReference>
<dbReference type="InterPro" id="IPR050513">
    <property type="entry name" value="RavA_ATPases"/>
</dbReference>
<dbReference type="InterPro" id="IPR046898">
    <property type="entry name" value="RavA_LARA_dom"/>
</dbReference>
<dbReference type="InterPro" id="IPR046932">
    <property type="entry name" value="RavA_LARA_sf"/>
</dbReference>
<dbReference type="NCBIfam" id="NF010054">
    <property type="entry name" value="PRK13531.1"/>
    <property type="match status" value="1"/>
</dbReference>
<dbReference type="PANTHER" id="PTHR32204">
    <property type="entry name" value="ATPASE RAVA"/>
    <property type="match status" value="1"/>
</dbReference>
<dbReference type="PANTHER" id="PTHR32204:SF0">
    <property type="entry name" value="ATPASE RAVA"/>
    <property type="match status" value="1"/>
</dbReference>
<dbReference type="Pfam" id="PF17868">
    <property type="entry name" value="AAA_lid_8"/>
    <property type="match status" value="1"/>
</dbReference>
<dbReference type="Pfam" id="PF12592">
    <property type="entry name" value="ATPase_RavA_C"/>
    <property type="match status" value="1"/>
</dbReference>
<dbReference type="Pfam" id="PF20030">
    <property type="entry name" value="bpMoxR"/>
    <property type="match status" value="1"/>
</dbReference>
<dbReference type="Pfam" id="PF20265">
    <property type="entry name" value="LARA_dom"/>
    <property type="match status" value="1"/>
</dbReference>
<dbReference type="SMART" id="SM00382">
    <property type="entry name" value="AAA"/>
    <property type="match status" value="1"/>
</dbReference>
<dbReference type="SUPFAM" id="SSF52540">
    <property type="entry name" value="P-loop containing nucleoside triphosphate hydrolases"/>
    <property type="match status" value="1"/>
</dbReference>
<evidence type="ECO:0000255" key="1">
    <source>
        <dbReference type="HAMAP-Rule" id="MF_01625"/>
    </source>
</evidence>
<evidence type="ECO:0000305" key="2"/>
<proteinExistence type="inferred from homology"/>
<name>RAVA_SALCH</name>
<protein>
    <recommendedName>
        <fullName evidence="1">Regulatory ATPase RavA</fullName>
        <ecNumber evidence="1">3.6.1.-</ecNumber>
    </recommendedName>
    <alternativeName>
        <fullName evidence="1">Regulatory ATPase variant A</fullName>
    </alternativeName>
</protein>
<reference key="1">
    <citation type="journal article" date="2005" name="Nucleic Acids Res.">
        <title>The genome sequence of Salmonella enterica serovar Choleraesuis, a highly invasive and resistant zoonotic pathogen.</title>
        <authorList>
            <person name="Chiu C.-H."/>
            <person name="Tang P."/>
            <person name="Chu C."/>
            <person name="Hu S."/>
            <person name="Bao Q."/>
            <person name="Yu J."/>
            <person name="Chou Y.-Y."/>
            <person name="Wang H.-S."/>
            <person name="Lee Y.-S."/>
        </authorList>
    </citation>
    <scope>NUCLEOTIDE SEQUENCE [LARGE SCALE GENOMIC DNA]</scope>
    <source>
        <strain>SC-B67</strain>
    </source>
</reference>
<comment type="function">
    <text evidence="1">Component of the RavA-ViaA chaperone complex, which may act on the membrane to optimize the function of some of the respiratory chains. RavA functions as an ATPase.</text>
</comment>
<comment type="catalytic activity">
    <reaction evidence="1">
        <text>ATP + H2O = ADP + phosphate + H(+)</text>
        <dbReference type="Rhea" id="RHEA:13065"/>
        <dbReference type="ChEBI" id="CHEBI:15377"/>
        <dbReference type="ChEBI" id="CHEBI:15378"/>
        <dbReference type="ChEBI" id="CHEBI:30616"/>
        <dbReference type="ChEBI" id="CHEBI:43474"/>
        <dbReference type="ChEBI" id="CHEBI:456216"/>
    </reaction>
</comment>
<comment type="activity regulation">
    <text evidence="1">ATPase activity is stimulated by ViaA.</text>
</comment>
<comment type="subunit">
    <text evidence="1">Homohexamer. Interacts with ViaA.</text>
</comment>
<comment type="subcellular location">
    <subcellularLocation>
        <location evidence="1">Cytoplasm</location>
    </subcellularLocation>
</comment>
<comment type="similarity">
    <text evidence="1">Belongs to the RavA family.</text>
</comment>
<comment type="sequence caution" evidence="2">
    <conflict type="erroneous initiation">
        <sequence resource="EMBL-CDS" id="AAX67698"/>
    </conflict>
</comment>
<feature type="chain" id="PRO_0000209374" description="Regulatory ATPase RavA">
    <location>
        <begin position="1"/>
        <end position="498"/>
    </location>
</feature>
<feature type="binding site" evidence="1">
    <location>
        <position position="23"/>
    </location>
    <ligand>
        <name>ADP</name>
        <dbReference type="ChEBI" id="CHEBI:456216"/>
    </ligand>
</feature>
<feature type="binding site" evidence="1">
    <location>
        <position position="49"/>
    </location>
    <ligand>
        <name>ADP</name>
        <dbReference type="ChEBI" id="CHEBI:456216"/>
    </ligand>
</feature>
<feature type="binding site" evidence="1">
    <location>
        <position position="50"/>
    </location>
    <ligand>
        <name>ADP</name>
        <dbReference type="ChEBI" id="CHEBI:456216"/>
    </ligand>
</feature>
<feature type="binding site" evidence="1">
    <location>
        <position position="51"/>
    </location>
    <ligand>
        <name>ADP</name>
        <dbReference type="ChEBI" id="CHEBI:456216"/>
    </ligand>
</feature>
<feature type="binding site" evidence="1">
    <location>
        <position position="52"/>
    </location>
    <ligand>
        <name>ADP</name>
        <dbReference type="ChEBI" id="CHEBI:456216"/>
    </ligand>
</feature>
<feature type="binding site" evidence="1">
    <location>
        <position position="53"/>
    </location>
    <ligand>
        <name>ADP</name>
        <dbReference type="ChEBI" id="CHEBI:456216"/>
    </ligand>
</feature>
<feature type="binding site" evidence="1">
    <location>
        <position position="54"/>
    </location>
    <ligand>
        <name>ADP</name>
        <dbReference type="ChEBI" id="CHEBI:456216"/>
    </ligand>
</feature>
<feature type="binding site" evidence="1">
    <location>
        <position position="196"/>
    </location>
    <ligand>
        <name>ADP</name>
        <dbReference type="ChEBI" id="CHEBI:456216"/>
    </ligand>
</feature>